<keyword id="KW-1015">Disulfide bond</keyword>
<keyword id="KW-0325">Glycoprotein</keyword>
<keyword id="KW-1185">Reference proteome</keyword>
<keyword id="KW-0964">Secreted</keyword>
<keyword id="KW-0732">Signal</keyword>
<protein>
    <recommendedName>
        <fullName>Corticotropin-releasing factor-binding protein</fullName>
        <shortName>CRF-BP</shortName>
        <shortName>CRF-binding protein</shortName>
    </recommendedName>
    <alternativeName>
        <fullName>Corticotropin-releasing hormone-binding protein</fullName>
        <shortName>CRH-BP</shortName>
    </alternativeName>
</protein>
<dbReference type="EMBL" id="U33323">
    <property type="protein sequence ID" value="AAC52253.1"/>
    <property type="molecule type" value="mRNA"/>
</dbReference>
<dbReference type="EMBL" id="BC061247">
    <property type="protein sequence ID" value="AAH61247.1"/>
    <property type="molecule type" value="mRNA"/>
</dbReference>
<dbReference type="CCDS" id="CCDS26698.1"/>
<dbReference type="RefSeq" id="NP_940800.1">
    <property type="nucleotide sequence ID" value="NM_198408.3"/>
</dbReference>
<dbReference type="SMR" id="Q60571"/>
<dbReference type="FunCoup" id="Q60571">
    <property type="interactions" value="67"/>
</dbReference>
<dbReference type="STRING" id="10090.ENSMUSP00000152083"/>
<dbReference type="GlyConnect" id="2237">
    <property type="glycosylation" value="2 N-Linked glycans (1 site)"/>
</dbReference>
<dbReference type="GlyCosmos" id="Q60571">
    <property type="glycosylation" value="1 site, 2 glycans"/>
</dbReference>
<dbReference type="GlyGen" id="Q60571">
    <property type="glycosylation" value="1 site, 3 N-linked glycans (1 site)"/>
</dbReference>
<dbReference type="iPTMnet" id="Q60571"/>
<dbReference type="PhosphoSitePlus" id="Q60571"/>
<dbReference type="PaxDb" id="10090-ENSMUSP00000042578"/>
<dbReference type="ProteomicsDB" id="283956"/>
<dbReference type="Antibodypedia" id="24474">
    <property type="antibodies" value="204 antibodies from 27 providers"/>
</dbReference>
<dbReference type="DNASU" id="12919"/>
<dbReference type="Ensembl" id="ENSMUST00000221025.2">
    <property type="protein sequence ID" value="ENSMUSP00000152083.2"/>
    <property type="gene ID" value="ENSMUSG00000021680.9"/>
</dbReference>
<dbReference type="GeneID" id="12919"/>
<dbReference type="KEGG" id="mmu:12919"/>
<dbReference type="UCSC" id="uc007rmk.2">
    <property type="organism name" value="mouse"/>
</dbReference>
<dbReference type="AGR" id="MGI:88497"/>
<dbReference type="CTD" id="1393"/>
<dbReference type="MGI" id="MGI:88497">
    <property type="gene designation" value="Crhbp"/>
</dbReference>
<dbReference type="VEuPathDB" id="HostDB:ENSMUSG00000021680"/>
<dbReference type="eggNOG" id="ENOG502QRNI">
    <property type="taxonomic scope" value="Eukaryota"/>
</dbReference>
<dbReference type="GeneTree" id="ENSGT00390000001362"/>
<dbReference type="HOGENOM" id="CLU_056739_0_0_1"/>
<dbReference type="InParanoid" id="Q60571"/>
<dbReference type="OMA" id="EFCFPSI"/>
<dbReference type="OrthoDB" id="8151at9989"/>
<dbReference type="PhylomeDB" id="Q60571"/>
<dbReference type="TreeFam" id="TF105383"/>
<dbReference type="Reactome" id="R-MMU-373080">
    <property type="pathway name" value="Class B/2 (Secretin family receptors)"/>
</dbReference>
<dbReference type="BioGRID-ORCS" id="12919">
    <property type="hits" value="1 hit in 79 CRISPR screens"/>
</dbReference>
<dbReference type="ChiTaRS" id="Crhbp">
    <property type="organism name" value="mouse"/>
</dbReference>
<dbReference type="PRO" id="PR:Q60571"/>
<dbReference type="Proteomes" id="UP000000589">
    <property type="component" value="Chromosome 13"/>
</dbReference>
<dbReference type="RNAct" id="Q60571">
    <property type="molecule type" value="protein"/>
</dbReference>
<dbReference type="Bgee" id="ENSMUSG00000021680">
    <property type="expression patterns" value="Expressed in vestibular membrane of cochlear duct and 55 other cell types or tissues"/>
</dbReference>
<dbReference type="ExpressionAtlas" id="Q60571">
    <property type="expression patterns" value="baseline and differential"/>
</dbReference>
<dbReference type="GO" id="GO:0043679">
    <property type="term" value="C:axon terminus"/>
    <property type="evidence" value="ECO:0000250"/>
    <property type="project" value="UniProtKB"/>
</dbReference>
<dbReference type="GO" id="GO:0030425">
    <property type="term" value="C:dendrite"/>
    <property type="evidence" value="ECO:0000250"/>
    <property type="project" value="UniProtKB"/>
</dbReference>
<dbReference type="GO" id="GO:0031045">
    <property type="term" value="C:dense core granule"/>
    <property type="evidence" value="ECO:0000250"/>
    <property type="project" value="UniProtKB"/>
</dbReference>
<dbReference type="GO" id="GO:0005615">
    <property type="term" value="C:extracellular space"/>
    <property type="evidence" value="ECO:0000314"/>
    <property type="project" value="UniProtKB"/>
</dbReference>
<dbReference type="GO" id="GO:0005874">
    <property type="term" value="C:microtubule"/>
    <property type="evidence" value="ECO:0000250"/>
    <property type="project" value="UniProtKB"/>
</dbReference>
<dbReference type="GO" id="GO:0005771">
    <property type="term" value="C:multivesicular body"/>
    <property type="evidence" value="ECO:0000250"/>
    <property type="project" value="UniProtKB"/>
</dbReference>
<dbReference type="GO" id="GO:0005634">
    <property type="term" value="C:nucleus"/>
    <property type="evidence" value="ECO:0000314"/>
    <property type="project" value="UniProtKB"/>
</dbReference>
<dbReference type="GO" id="GO:0043204">
    <property type="term" value="C:perikaryon"/>
    <property type="evidence" value="ECO:0000250"/>
    <property type="project" value="UniProtKB"/>
</dbReference>
<dbReference type="GO" id="GO:0005767">
    <property type="term" value="C:secondary lysosome"/>
    <property type="evidence" value="ECO:0000250"/>
    <property type="project" value="UniProtKB"/>
</dbReference>
<dbReference type="GO" id="GO:0030141">
    <property type="term" value="C:secretory granule"/>
    <property type="evidence" value="ECO:0000250"/>
    <property type="project" value="UniProtKB"/>
</dbReference>
<dbReference type="GO" id="GO:0043196">
    <property type="term" value="C:varicosity"/>
    <property type="evidence" value="ECO:0000250"/>
    <property type="project" value="UniProtKB"/>
</dbReference>
<dbReference type="GO" id="GO:0051424">
    <property type="term" value="F:corticotropin-releasing hormone binding"/>
    <property type="evidence" value="ECO:0000314"/>
    <property type="project" value="MGI"/>
</dbReference>
<dbReference type="GO" id="GO:0042277">
    <property type="term" value="F:peptide binding"/>
    <property type="evidence" value="ECO:0000250"/>
    <property type="project" value="UniProtKB"/>
</dbReference>
<dbReference type="GO" id="GO:0048149">
    <property type="term" value="P:behavioral response to ethanol"/>
    <property type="evidence" value="ECO:0000250"/>
    <property type="project" value="UniProtKB"/>
</dbReference>
<dbReference type="GO" id="GO:0071277">
    <property type="term" value="P:cellular response to calcium ion"/>
    <property type="evidence" value="ECO:0000314"/>
    <property type="project" value="UniProtKB"/>
</dbReference>
<dbReference type="GO" id="GO:0071320">
    <property type="term" value="P:cellular response to cAMP"/>
    <property type="evidence" value="ECO:0000314"/>
    <property type="project" value="UniProtKB"/>
</dbReference>
<dbReference type="GO" id="GO:0071314">
    <property type="term" value="P:cellular response to cocaine"/>
    <property type="evidence" value="ECO:0000250"/>
    <property type="project" value="UniProtKB"/>
</dbReference>
<dbReference type="GO" id="GO:0071392">
    <property type="term" value="P:cellular response to estradiol stimulus"/>
    <property type="evidence" value="ECO:0000314"/>
    <property type="project" value="UniProtKB"/>
</dbReference>
<dbReference type="GO" id="GO:0071391">
    <property type="term" value="P:cellular response to estrogen stimulus"/>
    <property type="evidence" value="ECO:0000250"/>
    <property type="project" value="UniProtKB"/>
</dbReference>
<dbReference type="GO" id="GO:0097211">
    <property type="term" value="P:cellular response to gonadotropin-releasing hormone"/>
    <property type="evidence" value="ECO:0000314"/>
    <property type="project" value="UniProtKB"/>
</dbReference>
<dbReference type="GO" id="GO:0035903">
    <property type="term" value="P:cellular response to immobilization stress"/>
    <property type="evidence" value="ECO:0000250"/>
    <property type="project" value="UniProtKB"/>
</dbReference>
<dbReference type="GO" id="GO:0035865">
    <property type="term" value="P:cellular response to potassium ion"/>
    <property type="evidence" value="ECO:0000250"/>
    <property type="project" value="UniProtKB"/>
</dbReference>
<dbReference type="GO" id="GO:0071356">
    <property type="term" value="P:cellular response to tumor necrosis factor"/>
    <property type="evidence" value="ECO:0000250"/>
    <property type="project" value="UniProtKB"/>
</dbReference>
<dbReference type="GO" id="GO:0071466">
    <property type="term" value="P:cellular response to xenobiotic stimulus"/>
    <property type="evidence" value="ECO:0000314"/>
    <property type="project" value="UniProtKB"/>
</dbReference>
<dbReference type="GO" id="GO:0007565">
    <property type="term" value="P:female pregnancy"/>
    <property type="evidence" value="ECO:0000250"/>
    <property type="project" value="UniProtKB"/>
</dbReference>
<dbReference type="GO" id="GO:0042445">
    <property type="term" value="P:hormone metabolic process"/>
    <property type="evidence" value="ECO:0000314"/>
    <property type="project" value="MGI"/>
</dbReference>
<dbReference type="GO" id="GO:0009755">
    <property type="term" value="P:hormone-mediated signaling pathway"/>
    <property type="evidence" value="ECO:0000250"/>
    <property type="project" value="UniProtKB"/>
</dbReference>
<dbReference type="GO" id="GO:0006954">
    <property type="term" value="P:inflammatory response"/>
    <property type="evidence" value="ECO:0000250"/>
    <property type="project" value="UniProtKB"/>
</dbReference>
<dbReference type="GO" id="GO:0002125">
    <property type="term" value="P:maternal aggressive behavior"/>
    <property type="evidence" value="ECO:0000315"/>
    <property type="project" value="UniProtKB"/>
</dbReference>
<dbReference type="GO" id="GO:0051460">
    <property type="term" value="P:negative regulation of corticotropin secretion"/>
    <property type="evidence" value="ECO:0000250"/>
    <property type="project" value="UniProtKB"/>
</dbReference>
<dbReference type="GO" id="GO:1900011">
    <property type="term" value="P:negative regulation of corticotropin-releasing hormone receptor activity"/>
    <property type="evidence" value="ECO:0000250"/>
    <property type="project" value="UniProtKB"/>
</dbReference>
<dbReference type="GO" id="GO:0045055">
    <property type="term" value="P:regulated exocytosis"/>
    <property type="evidence" value="ECO:0000250"/>
    <property type="project" value="UniProtKB"/>
</dbReference>
<dbReference type="GO" id="GO:0080135">
    <property type="term" value="P:regulation of cellular response to stress"/>
    <property type="evidence" value="ECO:0000250"/>
    <property type="project" value="UniProtKB"/>
</dbReference>
<dbReference type="GO" id="GO:0051459">
    <property type="term" value="P:regulation of corticotropin secretion"/>
    <property type="evidence" value="ECO:0000250"/>
    <property type="project" value="UniProtKB"/>
</dbReference>
<dbReference type="GO" id="GO:2000310">
    <property type="term" value="P:regulation of NMDA receptor activity"/>
    <property type="evidence" value="ECO:0000314"/>
    <property type="project" value="UniProtKB"/>
</dbReference>
<dbReference type="GO" id="GO:0001963">
    <property type="term" value="P:synaptic transmission, dopaminergic"/>
    <property type="evidence" value="ECO:0000314"/>
    <property type="project" value="UniProtKB"/>
</dbReference>
<dbReference type="InterPro" id="IPR008435">
    <property type="entry name" value="CRF-bd"/>
</dbReference>
<dbReference type="InterPro" id="IPR056178">
    <property type="entry name" value="CRF-BP_C"/>
</dbReference>
<dbReference type="InterPro" id="IPR056177">
    <property type="entry name" value="CRF-BP_N"/>
</dbReference>
<dbReference type="InterPro" id="IPR035914">
    <property type="entry name" value="Sperma_CUB_dom_sf"/>
</dbReference>
<dbReference type="PANTHER" id="PTHR10278">
    <property type="entry name" value="CORTICOTROPIN-RELEASING FACTOR-BINDING PROTEIN"/>
    <property type="match status" value="1"/>
</dbReference>
<dbReference type="PANTHER" id="PTHR10278:SF0">
    <property type="entry name" value="CORTICOTROPIN-RELEASING FACTOR-BINDING PROTEIN"/>
    <property type="match status" value="1"/>
</dbReference>
<dbReference type="Pfam" id="PF23541">
    <property type="entry name" value="CRF-BP_C"/>
    <property type="match status" value="1"/>
</dbReference>
<dbReference type="Pfam" id="PF05428">
    <property type="entry name" value="CRF-BP_N"/>
    <property type="match status" value="1"/>
</dbReference>
<dbReference type="PIRSF" id="PIRSF009279">
    <property type="entry name" value="CRF_bd"/>
    <property type="match status" value="1"/>
</dbReference>
<dbReference type="SUPFAM" id="SSF49854">
    <property type="entry name" value="Spermadhesin, CUB domain"/>
    <property type="match status" value="1"/>
</dbReference>
<gene>
    <name type="primary">Crhbp</name>
</gene>
<sequence>MSPNFKLQCHFILILLTALRGESRYLEVQEAAVYDPLLLFSANLKRDLAEEQPYRRALRCLDMLSLPGQFTFTADRPQLHCAAFFIGEPEEFITIHYDLVSIDCQGGDFLKVFDGWILKGEKFPSSQDHPLPTMKRYTDFCESGLTRRSIRSSQNVAMVFFRVHEPGNGFTITIKTDPNLFPCNVISQTPSGRFTLVVPYQHQNCSFSIIYPVAIKISDLTLGHLHGLQLKKPAAGCGGTGDFVELLGGTGLDPSKMMPLADLCYPFLGPAQMKISCDNAVVRMVSSGKHINRVTFEYRQLEPFELETSTGNSIPEYCLSSL</sequence>
<comment type="function">
    <text>Binds CRF and inactivates it. May prevent inappropriate pituitary-adrenal stimulation in pregnancy.</text>
</comment>
<comment type="subcellular location">
    <subcellularLocation>
        <location evidence="1">Secreted</location>
    </subcellularLocation>
</comment>
<comment type="similarity">
    <text evidence="3">Belongs to the CRF-binding protein family.</text>
</comment>
<accession>Q60571</accession>
<organism>
    <name type="scientific">Mus musculus</name>
    <name type="common">Mouse</name>
    <dbReference type="NCBI Taxonomy" id="10090"/>
    <lineage>
        <taxon>Eukaryota</taxon>
        <taxon>Metazoa</taxon>
        <taxon>Chordata</taxon>
        <taxon>Craniata</taxon>
        <taxon>Vertebrata</taxon>
        <taxon>Euteleostomi</taxon>
        <taxon>Mammalia</taxon>
        <taxon>Eutheria</taxon>
        <taxon>Euarchontoglires</taxon>
        <taxon>Glires</taxon>
        <taxon>Rodentia</taxon>
        <taxon>Myomorpha</taxon>
        <taxon>Muroidea</taxon>
        <taxon>Muridae</taxon>
        <taxon>Murinae</taxon>
        <taxon>Mus</taxon>
        <taxon>Mus</taxon>
    </lineage>
</organism>
<proteinExistence type="evidence at transcript level"/>
<reference key="1">
    <citation type="journal article" date="1995" name="Mol. Cell. Endocrinol.">
        <title>Molecular and biochemical characterization of the mouse brain corticotropin-releasing hormone-binding protein.</title>
        <authorList>
            <person name="Cortright D.N."/>
            <person name="Nicoletti A."/>
            <person name="Seasholtz A.F."/>
        </authorList>
    </citation>
    <scope>NUCLEOTIDE SEQUENCE [MRNA]</scope>
    <source>
        <strain>BALB/cJ</strain>
        <tissue>Brain</tissue>
    </source>
</reference>
<reference key="2">
    <citation type="journal article" date="2004" name="Genome Res.">
        <title>The status, quality, and expansion of the NIH full-length cDNA project: the Mammalian Gene Collection (MGC).</title>
        <authorList>
            <consortium name="The MGC Project Team"/>
        </authorList>
    </citation>
    <scope>NUCLEOTIDE SEQUENCE [LARGE SCALE MRNA]</scope>
    <source>
        <tissue>Pituitary</tissue>
    </source>
</reference>
<evidence type="ECO:0000250" key="1"/>
<evidence type="ECO:0000255" key="2"/>
<evidence type="ECO:0000305" key="3"/>
<name>CRHBP_MOUSE</name>
<feature type="signal peptide" evidence="1">
    <location>
        <begin position="1"/>
        <end position="24"/>
    </location>
</feature>
<feature type="chain" id="PRO_0000020995" description="Corticotropin-releasing factor-binding protein">
    <location>
        <begin position="25"/>
        <end position="322"/>
    </location>
</feature>
<feature type="glycosylation site" description="N-linked (GlcNAc...) asparagine" evidence="2">
    <location>
        <position position="204"/>
    </location>
</feature>
<feature type="disulfide bond" evidence="1">
    <location>
        <begin position="60"/>
        <end position="81"/>
    </location>
</feature>
<feature type="disulfide bond" evidence="1">
    <location>
        <begin position="104"/>
        <end position="141"/>
    </location>
</feature>
<feature type="disulfide bond" evidence="1">
    <location>
        <begin position="183"/>
        <end position="205"/>
    </location>
</feature>
<feature type="disulfide bond" evidence="1">
    <location>
        <begin position="237"/>
        <end position="264"/>
    </location>
</feature>
<feature type="disulfide bond" evidence="1">
    <location>
        <begin position="277"/>
        <end position="318"/>
    </location>
</feature>